<evidence type="ECO:0000255" key="1">
    <source>
        <dbReference type="HAMAP-Rule" id="MF_01208"/>
    </source>
</evidence>
<comment type="function">
    <text evidence="1">Catalyzes the transfer of a ribosyl phosphate group from 5-phosphoribose 1-diphosphate to orotate, leading to the formation of orotidine monophosphate (OMP).</text>
</comment>
<comment type="catalytic activity">
    <reaction evidence="1">
        <text>orotidine 5'-phosphate + diphosphate = orotate + 5-phospho-alpha-D-ribose 1-diphosphate</text>
        <dbReference type="Rhea" id="RHEA:10380"/>
        <dbReference type="ChEBI" id="CHEBI:30839"/>
        <dbReference type="ChEBI" id="CHEBI:33019"/>
        <dbReference type="ChEBI" id="CHEBI:57538"/>
        <dbReference type="ChEBI" id="CHEBI:58017"/>
        <dbReference type="EC" id="2.4.2.10"/>
    </reaction>
</comment>
<comment type="cofactor">
    <cofactor evidence="1">
        <name>Mg(2+)</name>
        <dbReference type="ChEBI" id="CHEBI:18420"/>
    </cofactor>
</comment>
<comment type="pathway">
    <text evidence="1">Pyrimidine metabolism; UMP biosynthesis via de novo pathway; UMP from orotate: step 1/2.</text>
</comment>
<comment type="subunit">
    <text evidence="1">Homodimer.</text>
</comment>
<comment type="similarity">
    <text evidence="1">Belongs to the purine/pyrimidine phosphoribosyltransferase family. PyrE subfamily.</text>
</comment>
<proteinExistence type="inferred from homology"/>
<keyword id="KW-0328">Glycosyltransferase</keyword>
<keyword id="KW-0460">Magnesium</keyword>
<keyword id="KW-0665">Pyrimidine biosynthesis</keyword>
<keyword id="KW-1185">Reference proteome</keyword>
<keyword id="KW-0808">Transferase</keyword>
<sequence length="192" mass="20733">MNTDDVLAVFREAGAILEGHFILTSGLRSPVFLQKARVFMHADKTEKLCKALAEKIRAADLGPIDYVVGPAIGGLIPSYETSRHLGVPSVWVERENGVFRLRRFDVPKGARVVIVEDIVTTGLSIRETIDCMKDLGIEVVAAACIVDRSAGKADVGTRLISLAEYEVPAYPADKLPPELAAIPAVKPGSRNI</sequence>
<gene>
    <name evidence="1" type="primary">pyrE</name>
    <name type="ordered locus">BAB1_0673</name>
</gene>
<accession>Q2YN10</accession>
<name>PYRE_BRUA2</name>
<reference key="1">
    <citation type="journal article" date="2005" name="Infect. Immun.">
        <title>Whole-genome analyses of speciation events in pathogenic Brucellae.</title>
        <authorList>
            <person name="Chain P.S."/>
            <person name="Comerci D.J."/>
            <person name="Tolmasky M.E."/>
            <person name="Larimer F.W."/>
            <person name="Malfatti S.A."/>
            <person name="Vergez L.M."/>
            <person name="Aguero F."/>
            <person name="Land M.L."/>
            <person name="Ugalde R.A."/>
            <person name="Garcia E."/>
        </authorList>
    </citation>
    <scope>NUCLEOTIDE SEQUENCE [LARGE SCALE GENOMIC DNA]</scope>
    <source>
        <strain>2308</strain>
    </source>
</reference>
<protein>
    <recommendedName>
        <fullName evidence="1">Orotate phosphoribosyltransferase</fullName>
        <shortName evidence="1">OPRT</shortName>
        <shortName evidence="1">OPRTase</shortName>
        <ecNumber evidence="1">2.4.2.10</ecNumber>
    </recommendedName>
</protein>
<dbReference type="EC" id="2.4.2.10" evidence="1"/>
<dbReference type="EMBL" id="AM040264">
    <property type="protein sequence ID" value="CAJ10629.1"/>
    <property type="molecule type" value="Genomic_DNA"/>
</dbReference>
<dbReference type="RefSeq" id="WP_002963797.1">
    <property type="nucleotide sequence ID" value="NZ_KN046823.1"/>
</dbReference>
<dbReference type="SMR" id="Q2YN10"/>
<dbReference type="STRING" id="359391.BAB1_0673"/>
<dbReference type="GeneID" id="97534018"/>
<dbReference type="KEGG" id="bmf:BAB1_0673"/>
<dbReference type="PATRIC" id="fig|359391.11.peg.2987"/>
<dbReference type="HOGENOM" id="CLU_074878_3_0_5"/>
<dbReference type="PhylomeDB" id="Q2YN10"/>
<dbReference type="UniPathway" id="UPA00070">
    <property type="reaction ID" value="UER00119"/>
</dbReference>
<dbReference type="Proteomes" id="UP000002719">
    <property type="component" value="Chromosome I"/>
</dbReference>
<dbReference type="GO" id="GO:0000287">
    <property type="term" value="F:magnesium ion binding"/>
    <property type="evidence" value="ECO:0007669"/>
    <property type="project" value="UniProtKB-UniRule"/>
</dbReference>
<dbReference type="GO" id="GO:0004588">
    <property type="term" value="F:orotate phosphoribosyltransferase activity"/>
    <property type="evidence" value="ECO:0007669"/>
    <property type="project" value="UniProtKB-UniRule"/>
</dbReference>
<dbReference type="GO" id="GO:0044205">
    <property type="term" value="P:'de novo' UMP biosynthetic process"/>
    <property type="evidence" value="ECO:0007669"/>
    <property type="project" value="UniProtKB-UniRule"/>
</dbReference>
<dbReference type="GO" id="GO:0019856">
    <property type="term" value="P:pyrimidine nucleobase biosynthetic process"/>
    <property type="evidence" value="ECO:0007669"/>
    <property type="project" value="InterPro"/>
</dbReference>
<dbReference type="CDD" id="cd06223">
    <property type="entry name" value="PRTases_typeI"/>
    <property type="match status" value="1"/>
</dbReference>
<dbReference type="Gene3D" id="3.40.50.2020">
    <property type="match status" value="1"/>
</dbReference>
<dbReference type="HAMAP" id="MF_01208">
    <property type="entry name" value="PyrE"/>
    <property type="match status" value="1"/>
</dbReference>
<dbReference type="InterPro" id="IPR023031">
    <property type="entry name" value="OPRT"/>
</dbReference>
<dbReference type="InterPro" id="IPR006273">
    <property type="entry name" value="Orotate_PRibTrfase_bac"/>
</dbReference>
<dbReference type="InterPro" id="IPR000836">
    <property type="entry name" value="PRibTrfase_dom"/>
</dbReference>
<dbReference type="InterPro" id="IPR029057">
    <property type="entry name" value="PRTase-like"/>
</dbReference>
<dbReference type="NCBIfam" id="TIGR01367">
    <property type="entry name" value="pyrE_Therm"/>
    <property type="match status" value="1"/>
</dbReference>
<dbReference type="PANTHER" id="PTHR19278">
    <property type="entry name" value="OROTATE PHOSPHORIBOSYLTRANSFERASE"/>
    <property type="match status" value="1"/>
</dbReference>
<dbReference type="PANTHER" id="PTHR19278:SF9">
    <property type="entry name" value="URIDINE 5'-MONOPHOSPHATE SYNTHASE"/>
    <property type="match status" value="1"/>
</dbReference>
<dbReference type="Pfam" id="PF00156">
    <property type="entry name" value="Pribosyltran"/>
    <property type="match status" value="1"/>
</dbReference>
<dbReference type="SUPFAM" id="SSF53271">
    <property type="entry name" value="PRTase-like"/>
    <property type="match status" value="1"/>
</dbReference>
<dbReference type="PROSITE" id="PS00103">
    <property type="entry name" value="PUR_PYR_PR_TRANSFER"/>
    <property type="match status" value="1"/>
</dbReference>
<organism>
    <name type="scientific">Brucella abortus (strain 2308)</name>
    <dbReference type="NCBI Taxonomy" id="359391"/>
    <lineage>
        <taxon>Bacteria</taxon>
        <taxon>Pseudomonadati</taxon>
        <taxon>Pseudomonadota</taxon>
        <taxon>Alphaproteobacteria</taxon>
        <taxon>Hyphomicrobiales</taxon>
        <taxon>Brucellaceae</taxon>
        <taxon>Brucella/Ochrobactrum group</taxon>
        <taxon>Brucella</taxon>
    </lineage>
</organism>
<feature type="chain" id="PRO_1000066213" description="Orotate phosphoribosyltransferase">
    <location>
        <begin position="1"/>
        <end position="192"/>
    </location>
</feature>
<feature type="binding site" evidence="1">
    <location>
        <begin position="116"/>
        <end position="124"/>
    </location>
    <ligand>
        <name>5-phospho-alpha-D-ribose 1-diphosphate</name>
        <dbReference type="ChEBI" id="CHEBI:58017"/>
    </ligand>
</feature>
<feature type="binding site" evidence="1">
    <location>
        <position position="120"/>
    </location>
    <ligand>
        <name>orotate</name>
        <dbReference type="ChEBI" id="CHEBI:30839"/>
    </ligand>
</feature>
<feature type="binding site" evidence="1">
    <location>
        <position position="148"/>
    </location>
    <ligand>
        <name>orotate</name>
        <dbReference type="ChEBI" id="CHEBI:30839"/>
    </ligand>
</feature>